<organism>
    <name type="scientific">Mycolicibacterium smegmatis (strain ATCC 700084 / mc(2)155)</name>
    <name type="common">Mycobacterium smegmatis</name>
    <dbReference type="NCBI Taxonomy" id="246196"/>
    <lineage>
        <taxon>Bacteria</taxon>
        <taxon>Bacillati</taxon>
        <taxon>Actinomycetota</taxon>
        <taxon>Actinomycetes</taxon>
        <taxon>Mycobacteriales</taxon>
        <taxon>Mycobacteriaceae</taxon>
        <taxon>Mycolicibacterium</taxon>
    </lineage>
</organism>
<protein>
    <recommendedName>
        <fullName evidence="1">ATP synthase subunit b</fullName>
    </recommendedName>
    <alternativeName>
        <fullName evidence="1">ATP synthase F(0) sector subunit b</fullName>
    </alternativeName>
    <alternativeName>
        <fullName evidence="1">ATPase subunit I</fullName>
    </alternativeName>
    <alternativeName>
        <fullName evidence="1">F-type ATPase subunit b</fullName>
        <shortName evidence="1">F-ATPase subunit b</shortName>
    </alternativeName>
</protein>
<evidence type="ECO:0000255" key="1">
    <source>
        <dbReference type="HAMAP-Rule" id="MF_01398"/>
    </source>
</evidence>
<evidence type="ECO:0000256" key="2">
    <source>
        <dbReference type="SAM" id="MobiDB-lite"/>
    </source>
</evidence>
<evidence type="ECO:0007829" key="3">
    <source>
        <dbReference type="PDB" id="7NJS"/>
    </source>
</evidence>
<evidence type="ECO:0007829" key="4">
    <source>
        <dbReference type="PDB" id="7NL9"/>
    </source>
</evidence>
<sequence>MGEFSATILAASQAAEEGGGGSNFLIPNGTFFAVLIIFLIVLGVISKWVVPPISKVLAEREAMLAKTAADNRKSAEQVAAAQADYEKEMAEARAQASALRDEARAAGRSVVDEKRAQASGEVAQTLTQADQQLSAQGDQVRSGLESSVDGLSAKLASRILGVDVNSGGTQ</sequence>
<dbReference type="EMBL" id="CP000480">
    <property type="protein sequence ID" value="ABK73316.1"/>
    <property type="molecule type" value="Genomic_DNA"/>
</dbReference>
<dbReference type="EMBL" id="CP001663">
    <property type="protein sequence ID" value="AFP41258.1"/>
    <property type="molecule type" value="Genomic_DNA"/>
</dbReference>
<dbReference type="RefSeq" id="WP_003896332.1">
    <property type="nucleotide sequence ID" value="NZ_SIJM01000067.1"/>
</dbReference>
<dbReference type="RefSeq" id="YP_889192.1">
    <property type="nucleotide sequence ID" value="NC_008596.1"/>
</dbReference>
<dbReference type="PDB" id="7JG5">
    <property type="method" value="EM"/>
    <property type="resolution" value="3.40 A"/>
    <property type="chains" value="b=1-170"/>
</dbReference>
<dbReference type="PDB" id="7JG6">
    <property type="method" value="EM"/>
    <property type="resolution" value="3.70 A"/>
    <property type="chains" value="b=1-170"/>
</dbReference>
<dbReference type="PDB" id="7JG7">
    <property type="method" value="EM"/>
    <property type="resolution" value="3.50 A"/>
    <property type="chains" value="b=1-170"/>
</dbReference>
<dbReference type="PDB" id="7JG8">
    <property type="method" value="EM"/>
    <property type="resolution" value="3.30 A"/>
    <property type="chains" value="b=1-170"/>
</dbReference>
<dbReference type="PDB" id="7JG9">
    <property type="method" value="EM"/>
    <property type="resolution" value="3.40 A"/>
    <property type="chains" value="b=1-170"/>
</dbReference>
<dbReference type="PDB" id="7JGA">
    <property type="method" value="EM"/>
    <property type="resolution" value="3.20 A"/>
    <property type="chains" value="b=1-170"/>
</dbReference>
<dbReference type="PDB" id="7JGB">
    <property type="method" value="EM"/>
    <property type="resolution" value="3.50 A"/>
    <property type="chains" value="b=1-170"/>
</dbReference>
<dbReference type="PDB" id="7JGC">
    <property type="method" value="EM"/>
    <property type="resolution" value="3.40 A"/>
    <property type="chains" value="b=1-170"/>
</dbReference>
<dbReference type="PDB" id="7NJK">
    <property type="method" value="EM"/>
    <property type="resolution" value="2.52 A"/>
    <property type="chains" value="b=1-170"/>
</dbReference>
<dbReference type="PDB" id="7NJL">
    <property type="method" value="EM"/>
    <property type="resolution" value="2.71 A"/>
    <property type="chains" value="b=1-170"/>
</dbReference>
<dbReference type="PDB" id="7NJM">
    <property type="method" value="EM"/>
    <property type="resolution" value="2.84 A"/>
    <property type="chains" value="b=1-170"/>
</dbReference>
<dbReference type="PDB" id="7NJN">
    <property type="method" value="EM"/>
    <property type="resolution" value="2.64 A"/>
    <property type="chains" value="b=1-170"/>
</dbReference>
<dbReference type="PDB" id="7NJO">
    <property type="method" value="EM"/>
    <property type="resolution" value="2.92 A"/>
    <property type="chains" value="b=1-170"/>
</dbReference>
<dbReference type="PDB" id="7NJP">
    <property type="method" value="EM"/>
    <property type="resolution" value="2.84 A"/>
    <property type="chains" value="b=1-170"/>
</dbReference>
<dbReference type="PDB" id="7NJQ">
    <property type="method" value="EM"/>
    <property type="resolution" value="2.67 A"/>
    <property type="chains" value="b=1-170"/>
</dbReference>
<dbReference type="PDB" id="7NJR">
    <property type="method" value="EM"/>
    <property type="resolution" value="2.56 A"/>
    <property type="chains" value="b=1-170"/>
</dbReference>
<dbReference type="PDB" id="7NJS">
    <property type="method" value="EM"/>
    <property type="resolution" value="2.46 A"/>
    <property type="chains" value="b=1-170"/>
</dbReference>
<dbReference type="PDB" id="7NJT">
    <property type="method" value="EM"/>
    <property type="resolution" value="2.75 A"/>
    <property type="chains" value="b=1-170"/>
</dbReference>
<dbReference type="PDB" id="7NJU">
    <property type="method" value="EM"/>
    <property type="resolution" value="3.74 A"/>
    <property type="chains" value="b=1-170"/>
</dbReference>
<dbReference type="PDB" id="7NJV">
    <property type="method" value="EM"/>
    <property type="resolution" value="2.90 A"/>
    <property type="chains" value="b=1-170"/>
</dbReference>
<dbReference type="PDB" id="7NJW">
    <property type="method" value="EM"/>
    <property type="resolution" value="3.67 A"/>
    <property type="chains" value="b=1-170"/>
</dbReference>
<dbReference type="PDB" id="7NJX">
    <property type="method" value="EM"/>
    <property type="resolution" value="4.32 A"/>
    <property type="chains" value="b=1-170"/>
</dbReference>
<dbReference type="PDB" id="7NJY">
    <property type="method" value="EM"/>
    <property type="resolution" value="2.94 A"/>
    <property type="chains" value="b=1-170"/>
</dbReference>
<dbReference type="PDB" id="7NK9">
    <property type="method" value="EM"/>
    <property type="resolution" value="2.90 A"/>
    <property type="chains" value="b=1-170"/>
</dbReference>
<dbReference type="PDB" id="7NKD">
    <property type="method" value="EM"/>
    <property type="resolution" value="3.12 A"/>
    <property type="chains" value="b=1-170"/>
</dbReference>
<dbReference type="PDB" id="7NKL">
    <property type="method" value="EM"/>
    <property type="resolution" value="3.67 A"/>
    <property type="chains" value="b=1-170"/>
</dbReference>
<dbReference type="PDB" id="7NKP">
    <property type="method" value="EM"/>
    <property type="resolution" value="4.06 A"/>
    <property type="chains" value="b=1-170"/>
</dbReference>
<dbReference type="PDB" id="7NKQ">
    <property type="method" value="EM"/>
    <property type="resolution" value="2.98 A"/>
    <property type="chains" value="b=1-170"/>
</dbReference>
<dbReference type="PDB" id="7NL9">
    <property type="method" value="EM"/>
    <property type="resolution" value="2.86 A"/>
    <property type="chains" value="b=1-170"/>
</dbReference>
<dbReference type="PDB" id="7Y5B">
    <property type="method" value="EM"/>
    <property type="resolution" value="4.40 A"/>
    <property type="chains" value="b=1-170"/>
</dbReference>
<dbReference type="PDB" id="7Y5C">
    <property type="method" value="EM"/>
    <property type="resolution" value="4.70 A"/>
    <property type="chains" value="b=1-170"/>
</dbReference>
<dbReference type="PDB" id="7Y5D">
    <property type="method" value="EM"/>
    <property type="resolution" value="7.30 A"/>
    <property type="chains" value="b=1-170"/>
</dbReference>
<dbReference type="PDB" id="8G07">
    <property type="method" value="EM"/>
    <property type="resolution" value="2.80 A"/>
    <property type="chains" value="b=1-170"/>
</dbReference>
<dbReference type="PDB" id="8G08">
    <property type="method" value="EM"/>
    <property type="resolution" value="2.80 A"/>
    <property type="chains" value="b=1-170"/>
</dbReference>
<dbReference type="PDB" id="8G09">
    <property type="method" value="EM"/>
    <property type="resolution" value="3.10 A"/>
    <property type="chains" value="b=1-170"/>
</dbReference>
<dbReference type="PDB" id="8G0A">
    <property type="method" value="EM"/>
    <property type="resolution" value="2.90 A"/>
    <property type="chains" value="b=1-170"/>
</dbReference>
<dbReference type="PDB" id="8G0B">
    <property type="method" value="EM"/>
    <property type="resolution" value="2.80 A"/>
    <property type="chains" value="b=1-170"/>
</dbReference>
<dbReference type="PDB" id="8G0C">
    <property type="method" value="EM"/>
    <property type="resolution" value="2.80 A"/>
    <property type="chains" value="b=1-170"/>
</dbReference>
<dbReference type="PDB" id="8G0D">
    <property type="method" value="EM"/>
    <property type="resolution" value="2.90 A"/>
    <property type="chains" value="b=1-170"/>
</dbReference>
<dbReference type="PDB" id="8G0E">
    <property type="method" value="EM"/>
    <property type="resolution" value="2.60 A"/>
    <property type="chains" value="b=1-170"/>
</dbReference>
<dbReference type="PDBsum" id="7JG5"/>
<dbReference type="PDBsum" id="7JG6"/>
<dbReference type="PDBsum" id="7JG7"/>
<dbReference type="PDBsum" id="7JG8"/>
<dbReference type="PDBsum" id="7JG9"/>
<dbReference type="PDBsum" id="7JGA"/>
<dbReference type="PDBsum" id="7JGB"/>
<dbReference type="PDBsum" id="7JGC"/>
<dbReference type="PDBsum" id="7NJK"/>
<dbReference type="PDBsum" id="7NJL"/>
<dbReference type="PDBsum" id="7NJM"/>
<dbReference type="PDBsum" id="7NJN"/>
<dbReference type="PDBsum" id="7NJO"/>
<dbReference type="PDBsum" id="7NJP"/>
<dbReference type="PDBsum" id="7NJQ"/>
<dbReference type="PDBsum" id="7NJR"/>
<dbReference type="PDBsum" id="7NJS"/>
<dbReference type="PDBsum" id="7NJT"/>
<dbReference type="PDBsum" id="7NJU"/>
<dbReference type="PDBsum" id="7NJV"/>
<dbReference type="PDBsum" id="7NJW"/>
<dbReference type="PDBsum" id="7NJX"/>
<dbReference type="PDBsum" id="7NJY"/>
<dbReference type="PDBsum" id="7NK9"/>
<dbReference type="PDBsum" id="7NKD"/>
<dbReference type="PDBsum" id="7NKL"/>
<dbReference type="PDBsum" id="7NKP"/>
<dbReference type="PDBsum" id="7NKQ"/>
<dbReference type="PDBsum" id="7NL9"/>
<dbReference type="PDBsum" id="7Y5B"/>
<dbReference type="PDBsum" id="7Y5C"/>
<dbReference type="PDBsum" id="7Y5D"/>
<dbReference type="PDBsum" id="8G07"/>
<dbReference type="PDBsum" id="8G08"/>
<dbReference type="PDBsum" id="8G09"/>
<dbReference type="PDBsum" id="8G0A"/>
<dbReference type="PDBsum" id="8G0B"/>
<dbReference type="PDBsum" id="8G0C"/>
<dbReference type="PDBsum" id="8G0D"/>
<dbReference type="PDBsum" id="8G0E"/>
<dbReference type="EMDB" id="EMD-12377"/>
<dbReference type="EMDB" id="EMD-12382"/>
<dbReference type="EMDB" id="EMD-12387"/>
<dbReference type="EMDB" id="EMD-12392"/>
<dbReference type="EMDB" id="EMD-12397"/>
<dbReference type="EMDB" id="EMD-12402"/>
<dbReference type="EMDB" id="EMD-12407"/>
<dbReference type="EMDB" id="EMD-12412"/>
<dbReference type="EMDB" id="EMD-12417"/>
<dbReference type="EMDB" id="EMD-12422"/>
<dbReference type="EMDB" id="EMD-12423"/>
<dbReference type="EMDB" id="EMD-12424"/>
<dbReference type="EMDB" id="EMD-12425"/>
<dbReference type="EMDB" id="EMD-12426"/>
<dbReference type="EMDB" id="EMD-12427"/>
<dbReference type="EMDB" id="EMD-12434"/>
<dbReference type="EMDB" id="EMD-12438"/>
<dbReference type="EMDB" id="EMD-12446"/>
<dbReference type="EMDB" id="EMD-12461"/>
<dbReference type="EMDB" id="EMD-29648"/>
<dbReference type="EMDB" id="EMD-29649"/>
<dbReference type="EMDB" id="EMD-29650"/>
<dbReference type="EMDB" id="EMD-29651"/>
<dbReference type="EMDB" id="EMD-29652"/>
<dbReference type="EMDB" id="EMD-29653"/>
<dbReference type="EMDB" id="EMD-29654"/>
<dbReference type="EMDB" id="EMD-29655"/>
<dbReference type="EMDB" id="EMD-33615"/>
<dbReference type="EMDB" id="EMD-33616"/>
<dbReference type="EMDB" id="EMD-33617"/>
<dbReference type="SMR" id="A0R204"/>
<dbReference type="STRING" id="246196.MSMEG_4940"/>
<dbReference type="PaxDb" id="246196-MSMEI_4813"/>
<dbReference type="KEGG" id="msb:LJ00_24430"/>
<dbReference type="KEGG" id="msg:MSMEI_4813"/>
<dbReference type="KEGG" id="msm:MSMEG_4940"/>
<dbReference type="PATRIC" id="fig|246196.19.peg.4819"/>
<dbReference type="eggNOG" id="COG0711">
    <property type="taxonomic scope" value="Bacteria"/>
</dbReference>
<dbReference type="OrthoDB" id="4638851at2"/>
<dbReference type="Proteomes" id="UP000000757">
    <property type="component" value="Chromosome"/>
</dbReference>
<dbReference type="Proteomes" id="UP000006158">
    <property type="component" value="Chromosome"/>
</dbReference>
<dbReference type="GO" id="GO:0005886">
    <property type="term" value="C:plasma membrane"/>
    <property type="evidence" value="ECO:0007669"/>
    <property type="project" value="UniProtKB-SubCell"/>
</dbReference>
<dbReference type="GO" id="GO:0045259">
    <property type="term" value="C:proton-transporting ATP synthase complex"/>
    <property type="evidence" value="ECO:0007669"/>
    <property type="project" value="UniProtKB-KW"/>
</dbReference>
<dbReference type="GO" id="GO:0046933">
    <property type="term" value="F:proton-transporting ATP synthase activity, rotational mechanism"/>
    <property type="evidence" value="ECO:0007669"/>
    <property type="project" value="UniProtKB-UniRule"/>
</dbReference>
<dbReference type="GO" id="GO:0046961">
    <property type="term" value="F:proton-transporting ATPase activity, rotational mechanism"/>
    <property type="evidence" value="ECO:0007669"/>
    <property type="project" value="TreeGrafter"/>
</dbReference>
<dbReference type="CDD" id="cd06503">
    <property type="entry name" value="ATP-synt_Fo_b"/>
    <property type="match status" value="1"/>
</dbReference>
<dbReference type="HAMAP" id="MF_01398">
    <property type="entry name" value="ATP_synth_b_bprime"/>
    <property type="match status" value="1"/>
</dbReference>
<dbReference type="InterPro" id="IPR028987">
    <property type="entry name" value="ATP_synth_B-like_membr_sf"/>
</dbReference>
<dbReference type="InterPro" id="IPR002146">
    <property type="entry name" value="ATP_synth_b/b'su_bac/chlpt"/>
</dbReference>
<dbReference type="InterPro" id="IPR005864">
    <property type="entry name" value="ATP_synth_F0_bsu_bac"/>
</dbReference>
<dbReference type="InterPro" id="IPR050059">
    <property type="entry name" value="ATP_synthase_B_chain"/>
</dbReference>
<dbReference type="NCBIfam" id="TIGR01144">
    <property type="entry name" value="ATP_synt_b"/>
    <property type="match status" value="1"/>
</dbReference>
<dbReference type="NCBIfam" id="NF004412">
    <property type="entry name" value="PRK05759.1-3"/>
    <property type="match status" value="1"/>
</dbReference>
<dbReference type="PANTHER" id="PTHR33445:SF1">
    <property type="entry name" value="ATP SYNTHASE SUBUNIT B"/>
    <property type="match status" value="1"/>
</dbReference>
<dbReference type="PANTHER" id="PTHR33445">
    <property type="entry name" value="ATP SYNTHASE SUBUNIT B', CHLOROPLASTIC"/>
    <property type="match status" value="1"/>
</dbReference>
<dbReference type="Pfam" id="PF00430">
    <property type="entry name" value="ATP-synt_B"/>
    <property type="match status" value="1"/>
</dbReference>
<dbReference type="SUPFAM" id="SSF81573">
    <property type="entry name" value="F1F0 ATP synthase subunit B, membrane domain"/>
    <property type="match status" value="1"/>
</dbReference>
<gene>
    <name evidence="1" type="primary">atpF</name>
    <name type="ordered locus">MSMEG_4940</name>
    <name type="ordered locus">MSMEI_4813</name>
</gene>
<feature type="chain" id="PRO_0000368599" description="ATP synthase subunit b">
    <location>
        <begin position="1"/>
        <end position="170"/>
    </location>
</feature>
<feature type="transmembrane region" description="Helical" evidence="1">
    <location>
        <begin position="25"/>
        <end position="45"/>
    </location>
</feature>
<feature type="region of interest" description="Disordered" evidence="2">
    <location>
        <begin position="121"/>
        <end position="147"/>
    </location>
</feature>
<feature type="compositionally biased region" description="Polar residues" evidence="2">
    <location>
        <begin position="122"/>
        <end position="139"/>
    </location>
</feature>
<feature type="strand" evidence="4">
    <location>
        <begin position="24"/>
        <end position="26"/>
    </location>
</feature>
<feature type="helix" evidence="3">
    <location>
        <begin position="30"/>
        <end position="47"/>
    </location>
</feature>
<feature type="helix" evidence="3">
    <location>
        <begin position="50"/>
        <end position="144"/>
    </location>
</feature>
<feature type="turn" evidence="3">
    <location>
        <begin position="145"/>
        <end position="147"/>
    </location>
</feature>
<feature type="helix" evidence="3">
    <location>
        <begin position="148"/>
        <end position="160"/>
    </location>
</feature>
<keyword id="KW-0002">3D-structure</keyword>
<keyword id="KW-0066">ATP synthesis</keyword>
<keyword id="KW-1003">Cell membrane</keyword>
<keyword id="KW-0138">CF(0)</keyword>
<keyword id="KW-0375">Hydrogen ion transport</keyword>
<keyword id="KW-0406">Ion transport</keyword>
<keyword id="KW-0472">Membrane</keyword>
<keyword id="KW-1185">Reference proteome</keyword>
<keyword id="KW-0812">Transmembrane</keyword>
<keyword id="KW-1133">Transmembrane helix</keyword>
<keyword id="KW-0813">Transport</keyword>
<accession>A0R204</accession>
<accession>I7FR62</accession>
<name>ATPF_MYCS2</name>
<comment type="function">
    <text evidence="1">F(1)F(0) ATP synthase produces ATP from ADP in the presence of a proton or sodium gradient. F-type ATPases consist of two structural domains, F(1) containing the extramembraneous catalytic core and F(0) containing the membrane proton channel, linked together by a central stalk and a peripheral stalk. During catalysis, ATP synthesis in the catalytic domain of F(1) is coupled via a rotary mechanism of the central stalk subunits to proton translocation.</text>
</comment>
<comment type="function">
    <text evidence="1">Component of the F(0) channel, it forms part of the peripheral stalk, linking F(1) to F(0).</text>
</comment>
<comment type="subunit">
    <text evidence="1">F-type ATPases have 2 components, F(1) - the catalytic core - and F(0) - the membrane proton channel. F(1) has five subunits: alpha(3), beta(3), gamma(1), delta(1), epsilon(1). F(0) has three main subunits: a(1), b(2) and c(10-14). The alpha and beta chains form an alternating ring which encloses part of the gamma chain. F(1) is attached to F(0) by a central stalk formed by the gamma and epsilon chains, while a peripheral stalk is formed by the delta and b chains.</text>
</comment>
<comment type="subcellular location">
    <subcellularLocation>
        <location evidence="1">Cell membrane</location>
        <topology evidence="1">Single-pass membrane protein</topology>
    </subcellularLocation>
</comment>
<comment type="similarity">
    <text evidence="1">Belongs to the ATPase B chain family.</text>
</comment>
<reference key="1">
    <citation type="submission" date="2006-10" db="EMBL/GenBank/DDBJ databases">
        <authorList>
            <person name="Fleischmann R.D."/>
            <person name="Dodson R.J."/>
            <person name="Haft D.H."/>
            <person name="Merkel J.S."/>
            <person name="Nelson W.C."/>
            <person name="Fraser C.M."/>
        </authorList>
    </citation>
    <scope>NUCLEOTIDE SEQUENCE [LARGE SCALE GENOMIC DNA]</scope>
    <source>
        <strain>ATCC 700084 / mc(2)155</strain>
    </source>
</reference>
<reference key="2">
    <citation type="journal article" date="2007" name="Genome Biol.">
        <title>Interrupted coding sequences in Mycobacterium smegmatis: authentic mutations or sequencing errors?</title>
        <authorList>
            <person name="Deshayes C."/>
            <person name="Perrodou E."/>
            <person name="Gallien S."/>
            <person name="Euphrasie D."/>
            <person name="Schaeffer C."/>
            <person name="Van-Dorsselaer A."/>
            <person name="Poch O."/>
            <person name="Lecompte O."/>
            <person name="Reyrat J.-M."/>
        </authorList>
    </citation>
    <scope>NUCLEOTIDE SEQUENCE [LARGE SCALE GENOMIC DNA]</scope>
    <source>
        <strain>ATCC 700084 / mc(2)155</strain>
    </source>
</reference>
<reference key="3">
    <citation type="journal article" date="2009" name="Genome Res.">
        <title>Ortho-proteogenomics: multiple proteomes investigation through orthology and a new MS-based protocol.</title>
        <authorList>
            <person name="Gallien S."/>
            <person name="Perrodou E."/>
            <person name="Carapito C."/>
            <person name="Deshayes C."/>
            <person name="Reyrat J.-M."/>
            <person name="Van Dorsselaer A."/>
            <person name="Poch O."/>
            <person name="Schaeffer C."/>
            <person name="Lecompte O."/>
        </authorList>
    </citation>
    <scope>NUCLEOTIDE SEQUENCE [LARGE SCALE GENOMIC DNA]</scope>
    <source>
        <strain>ATCC 700084 / mc(2)155</strain>
    </source>
</reference>
<proteinExistence type="evidence at protein level"/>